<evidence type="ECO:0000255" key="1">
    <source>
        <dbReference type="HAMAP-Rule" id="MF_00558"/>
    </source>
</evidence>
<sequence length="388" mass="41753">MKLHEYQAKQLFHRYGIPIPEGRLARSVEETGQAARAFAGRCVVKAQIHAGGRGKAGGVARVNSVDQARNIAQRLLQHTLVTAQTGDQGLYVGSLLVEEIVPVAREMYLSLTLDRANGRYCLIASPDGGVDIEQTARKTPERVRRLTIDPLVGLRAFHARDIARFLGLDGPLSAAASKVILSLYRCLLEKDASLVEINPLAVTEEGRLMAMDAKVSIDDSALFRQKEMLEWLDESQLAPLEVRAAHSDIAYIKMDGCIGCLVNGAGLAMATLDMLSECGGQPANFLDVGGGADQDKVVEAFRILLEDPAVEGVLVNIFGGIMRCDLIAQGLIAAAEQVGCQLPIVVRMAGARRDEGKHLLQQTQLNISWQDGLAAAATAIVRQLSPSA</sequence>
<feature type="chain" id="PRO_1000082152" description="Succinate--CoA ligase [ADP-forming] subunit beta">
    <location>
        <begin position="1"/>
        <end position="388"/>
    </location>
</feature>
<feature type="domain" description="ATP-grasp" evidence="1">
    <location>
        <begin position="9"/>
        <end position="243"/>
    </location>
</feature>
<feature type="binding site" evidence="1">
    <location>
        <position position="45"/>
    </location>
    <ligand>
        <name>ATP</name>
        <dbReference type="ChEBI" id="CHEBI:30616"/>
    </ligand>
</feature>
<feature type="binding site" evidence="1">
    <location>
        <begin position="52"/>
        <end position="54"/>
    </location>
    <ligand>
        <name>ATP</name>
        <dbReference type="ChEBI" id="CHEBI:30616"/>
    </ligand>
</feature>
<feature type="binding site" evidence="1">
    <location>
        <position position="98"/>
    </location>
    <ligand>
        <name>ATP</name>
        <dbReference type="ChEBI" id="CHEBI:30616"/>
    </ligand>
</feature>
<feature type="binding site" evidence="1">
    <location>
        <position position="101"/>
    </location>
    <ligand>
        <name>ATP</name>
        <dbReference type="ChEBI" id="CHEBI:30616"/>
    </ligand>
</feature>
<feature type="binding site" evidence="1">
    <location>
        <position position="106"/>
    </location>
    <ligand>
        <name>ATP</name>
        <dbReference type="ChEBI" id="CHEBI:30616"/>
    </ligand>
</feature>
<feature type="binding site" evidence="1">
    <location>
        <position position="198"/>
    </location>
    <ligand>
        <name>Mg(2+)</name>
        <dbReference type="ChEBI" id="CHEBI:18420"/>
    </ligand>
</feature>
<feature type="binding site" evidence="1">
    <location>
        <position position="212"/>
    </location>
    <ligand>
        <name>Mg(2+)</name>
        <dbReference type="ChEBI" id="CHEBI:18420"/>
    </ligand>
</feature>
<feature type="binding site" evidence="1">
    <location>
        <position position="263"/>
    </location>
    <ligand>
        <name>substrate</name>
        <note>ligand shared with subunit alpha</note>
    </ligand>
</feature>
<feature type="binding site" evidence="1">
    <location>
        <begin position="320"/>
        <end position="322"/>
    </location>
    <ligand>
        <name>substrate</name>
        <note>ligand shared with subunit alpha</note>
    </ligand>
</feature>
<name>SUCC_SYNC1</name>
<dbReference type="EC" id="6.2.1.5" evidence="1"/>
<dbReference type="EMBL" id="CP000142">
    <property type="protein sequence ID" value="ABA87508.1"/>
    <property type="molecule type" value="Genomic_DNA"/>
</dbReference>
<dbReference type="RefSeq" id="WP_011339913.1">
    <property type="nucleotide sequence ID" value="NC_007498.2"/>
</dbReference>
<dbReference type="SMR" id="Q3A7Y4"/>
<dbReference type="STRING" id="338963.Pcar_0247"/>
<dbReference type="KEGG" id="pca:Pcar_0247"/>
<dbReference type="eggNOG" id="COG0045">
    <property type="taxonomic scope" value="Bacteria"/>
</dbReference>
<dbReference type="HOGENOM" id="CLU_037430_0_2_7"/>
<dbReference type="OrthoDB" id="9802602at2"/>
<dbReference type="UniPathway" id="UPA00223">
    <property type="reaction ID" value="UER00999"/>
</dbReference>
<dbReference type="Proteomes" id="UP000002534">
    <property type="component" value="Chromosome"/>
</dbReference>
<dbReference type="GO" id="GO:0005829">
    <property type="term" value="C:cytosol"/>
    <property type="evidence" value="ECO:0007669"/>
    <property type="project" value="TreeGrafter"/>
</dbReference>
<dbReference type="GO" id="GO:0042709">
    <property type="term" value="C:succinate-CoA ligase complex"/>
    <property type="evidence" value="ECO:0007669"/>
    <property type="project" value="TreeGrafter"/>
</dbReference>
<dbReference type="GO" id="GO:0005524">
    <property type="term" value="F:ATP binding"/>
    <property type="evidence" value="ECO:0007669"/>
    <property type="project" value="UniProtKB-UniRule"/>
</dbReference>
<dbReference type="GO" id="GO:0000287">
    <property type="term" value="F:magnesium ion binding"/>
    <property type="evidence" value="ECO:0007669"/>
    <property type="project" value="UniProtKB-UniRule"/>
</dbReference>
<dbReference type="GO" id="GO:0004775">
    <property type="term" value="F:succinate-CoA ligase (ADP-forming) activity"/>
    <property type="evidence" value="ECO:0007669"/>
    <property type="project" value="UniProtKB-UniRule"/>
</dbReference>
<dbReference type="GO" id="GO:0004776">
    <property type="term" value="F:succinate-CoA ligase (GDP-forming) activity"/>
    <property type="evidence" value="ECO:0007669"/>
    <property type="project" value="RHEA"/>
</dbReference>
<dbReference type="GO" id="GO:0006104">
    <property type="term" value="P:succinyl-CoA metabolic process"/>
    <property type="evidence" value="ECO:0007669"/>
    <property type="project" value="TreeGrafter"/>
</dbReference>
<dbReference type="GO" id="GO:0006099">
    <property type="term" value="P:tricarboxylic acid cycle"/>
    <property type="evidence" value="ECO:0007669"/>
    <property type="project" value="UniProtKB-UniRule"/>
</dbReference>
<dbReference type="FunFam" id="3.30.1490.20:FF:000002">
    <property type="entry name" value="Succinate--CoA ligase [ADP-forming] subunit beta"/>
    <property type="match status" value="1"/>
</dbReference>
<dbReference type="FunFam" id="3.30.470.20:FF:000002">
    <property type="entry name" value="Succinate--CoA ligase [ADP-forming] subunit beta"/>
    <property type="match status" value="1"/>
</dbReference>
<dbReference type="FunFam" id="3.40.50.261:FF:000001">
    <property type="entry name" value="Succinate--CoA ligase [ADP-forming] subunit beta"/>
    <property type="match status" value="1"/>
</dbReference>
<dbReference type="Gene3D" id="3.30.1490.20">
    <property type="entry name" value="ATP-grasp fold, A domain"/>
    <property type="match status" value="1"/>
</dbReference>
<dbReference type="Gene3D" id="3.30.470.20">
    <property type="entry name" value="ATP-grasp fold, B domain"/>
    <property type="match status" value="1"/>
</dbReference>
<dbReference type="Gene3D" id="3.40.50.261">
    <property type="entry name" value="Succinyl-CoA synthetase domains"/>
    <property type="match status" value="1"/>
</dbReference>
<dbReference type="HAMAP" id="MF_00558">
    <property type="entry name" value="Succ_CoA_beta"/>
    <property type="match status" value="1"/>
</dbReference>
<dbReference type="InterPro" id="IPR011761">
    <property type="entry name" value="ATP-grasp"/>
</dbReference>
<dbReference type="InterPro" id="IPR013650">
    <property type="entry name" value="ATP-grasp_succ-CoA_synth-type"/>
</dbReference>
<dbReference type="InterPro" id="IPR013815">
    <property type="entry name" value="ATP_grasp_subdomain_1"/>
</dbReference>
<dbReference type="InterPro" id="IPR017866">
    <property type="entry name" value="Succ-CoA_synthase_bsu_CS"/>
</dbReference>
<dbReference type="InterPro" id="IPR005811">
    <property type="entry name" value="SUCC_ACL_C"/>
</dbReference>
<dbReference type="InterPro" id="IPR005809">
    <property type="entry name" value="Succ_CoA_ligase-like_bsu"/>
</dbReference>
<dbReference type="InterPro" id="IPR016102">
    <property type="entry name" value="Succinyl-CoA_synth-like"/>
</dbReference>
<dbReference type="NCBIfam" id="NF001913">
    <property type="entry name" value="PRK00696.1"/>
    <property type="match status" value="1"/>
</dbReference>
<dbReference type="NCBIfam" id="TIGR01016">
    <property type="entry name" value="sucCoAbeta"/>
    <property type="match status" value="1"/>
</dbReference>
<dbReference type="PANTHER" id="PTHR11815:SF10">
    <property type="entry name" value="SUCCINATE--COA LIGASE [GDP-FORMING] SUBUNIT BETA, MITOCHONDRIAL"/>
    <property type="match status" value="1"/>
</dbReference>
<dbReference type="PANTHER" id="PTHR11815">
    <property type="entry name" value="SUCCINYL-COA SYNTHETASE BETA CHAIN"/>
    <property type="match status" value="1"/>
</dbReference>
<dbReference type="Pfam" id="PF08442">
    <property type="entry name" value="ATP-grasp_2"/>
    <property type="match status" value="1"/>
</dbReference>
<dbReference type="Pfam" id="PF00549">
    <property type="entry name" value="Ligase_CoA"/>
    <property type="match status" value="1"/>
</dbReference>
<dbReference type="PIRSF" id="PIRSF001554">
    <property type="entry name" value="SucCS_beta"/>
    <property type="match status" value="1"/>
</dbReference>
<dbReference type="SUPFAM" id="SSF56059">
    <property type="entry name" value="Glutathione synthetase ATP-binding domain-like"/>
    <property type="match status" value="1"/>
</dbReference>
<dbReference type="SUPFAM" id="SSF52210">
    <property type="entry name" value="Succinyl-CoA synthetase domains"/>
    <property type="match status" value="1"/>
</dbReference>
<dbReference type="PROSITE" id="PS50975">
    <property type="entry name" value="ATP_GRASP"/>
    <property type="match status" value="1"/>
</dbReference>
<dbReference type="PROSITE" id="PS01217">
    <property type="entry name" value="SUCCINYL_COA_LIG_3"/>
    <property type="match status" value="1"/>
</dbReference>
<comment type="function">
    <text evidence="1">Succinyl-CoA synthetase functions in the citric acid cycle (TCA), coupling the hydrolysis of succinyl-CoA to the synthesis of either ATP or GTP and thus represents the only step of substrate-level phosphorylation in the TCA. The beta subunit provides nucleotide specificity of the enzyme and binds the substrate succinate, while the binding sites for coenzyme A and phosphate are found in the alpha subunit.</text>
</comment>
<comment type="catalytic activity">
    <reaction evidence="1">
        <text>succinate + ATP + CoA = succinyl-CoA + ADP + phosphate</text>
        <dbReference type="Rhea" id="RHEA:17661"/>
        <dbReference type="ChEBI" id="CHEBI:30031"/>
        <dbReference type="ChEBI" id="CHEBI:30616"/>
        <dbReference type="ChEBI" id="CHEBI:43474"/>
        <dbReference type="ChEBI" id="CHEBI:57287"/>
        <dbReference type="ChEBI" id="CHEBI:57292"/>
        <dbReference type="ChEBI" id="CHEBI:456216"/>
        <dbReference type="EC" id="6.2.1.5"/>
    </reaction>
    <physiologicalReaction direction="right-to-left" evidence="1">
        <dbReference type="Rhea" id="RHEA:17663"/>
    </physiologicalReaction>
</comment>
<comment type="catalytic activity">
    <reaction evidence="1">
        <text>GTP + succinate + CoA = succinyl-CoA + GDP + phosphate</text>
        <dbReference type="Rhea" id="RHEA:22120"/>
        <dbReference type="ChEBI" id="CHEBI:30031"/>
        <dbReference type="ChEBI" id="CHEBI:37565"/>
        <dbReference type="ChEBI" id="CHEBI:43474"/>
        <dbReference type="ChEBI" id="CHEBI:57287"/>
        <dbReference type="ChEBI" id="CHEBI:57292"/>
        <dbReference type="ChEBI" id="CHEBI:58189"/>
    </reaction>
    <physiologicalReaction direction="right-to-left" evidence="1">
        <dbReference type="Rhea" id="RHEA:22122"/>
    </physiologicalReaction>
</comment>
<comment type="cofactor">
    <cofactor evidence="1">
        <name>Mg(2+)</name>
        <dbReference type="ChEBI" id="CHEBI:18420"/>
    </cofactor>
    <text evidence="1">Binds 1 Mg(2+) ion per subunit.</text>
</comment>
<comment type="pathway">
    <text evidence="1">Carbohydrate metabolism; tricarboxylic acid cycle; succinate from succinyl-CoA (ligase route): step 1/1.</text>
</comment>
<comment type="subunit">
    <text evidence="1">Heterotetramer of two alpha and two beta subunits.</text>
</comment>
<comment type="similarity">
    <text evidence="1">Belongs to the succinate/malate CoA ligase beta subunit family.</text>
</comment>
<keyword id="KW-0067">ATP-binding</keyword>
<keyword id="KW-0436">Ligase</keyword>
<keyword id="KW-0460">Magnesium</keyword>
<keyword id="KW-0479">Metal-binding</keyword>
<keyword id="KW-0547">Nucleotide-binding</keyword>
<keyword id="KW-1185">Reference proteome</keyword>
<keyword id="KW-0816">Tricarboxylic acid cycle</keyword>
<reference key="1">
    <citation type="submission" date="2005-10" db="EMBL/GenBank/DDBJ databases">
        <title>Complete sequence of Pelobacter carbinolicus DSM 2380.</title>
        <authorList>
            <person name="Copeland A."/>
            <person name="Lucas S."/>
            <person name="Lapidus A."/>
            <person name="Barry K."/>
            <person name="Detter J.C."/>
            <person name="Glavina T."/>
            <person name="Hammon N."/>
            <person name="Israni S."/>
            <person name="Pitluck S."/>
            <person name="Chertkov O."/>
            <person name="Schmutz J."/>
            <person name="Larimer F."/>
            <person name="Land M."/>
            <person name="Kyrpides N."/>
            <person name="Ivanova N."/>
            <person name="Richardson P."/>
        </authorList>
    </citation>
    <scope>NUCLEOTIDE SEQUENCE [LARGE SCALE GENOMIC DNA]</scope>
    <source>
        <strain>DSM 2380 / NBRC 103641 / GraBd1</strain>
    </source>
</reference>
<organism>
    <name type="scientific">Syntrophotalea carbinolica (strain DSM 2380 / NBRC 103641 / GraBd1)</name>
    <name type="common">Pelobacter carbinolicus</name>
    <dbReference type="NCBI Taxonomy" id="338963"/>
    <lineage>
        <taxon>Bacteria</taxon>
        <taxon>Pseudomonadati</taxon>
        <taxon>Thermodesulfobacteriota</taxon>
        <taxon>Desulfuromonadia</taxon>
        <taxon>Desulfuromonadales</taxon>
        <taxon>Syntrophotaleaceae</taxon>
        <taxon>Syntrophotalea</taxon>
    </lineage>
</organism>
<gene>
    <name evidence="1" type="primary">sucC</name>
    <name type="ordered locus">Pcar_0247</name>
</gene>
<accession>Q3A7Y4</accession>
<protein>
    <recommendedName>
        <fullName evidence="1">Succinate--CoA ligase [ADP-forming] subunit beta</fullName>
        <ecNumber evidence="1">6.2.1.5</ecNumber>
    </recommendedName>
    <alternativeName>
        <fullName evidence="1">Succinyl-CoA synthetase subunit beta</fullName>
        <shortName evidence="1">SCS-beta</shortName>
    </alternativeName>
</protein>
<proteinExistence type="inferred from homology"/>